<sequence>MGLLSVDLLITLQILPVFFSNCLFLALYDSVILLKHVALLLSRSKSTRGEWRRMLTSEGLRCVWNSFLLDAYKQVKLGEDAPNSSVVHVSNPESGNNYASEKTADGAECHLLDFASAERPLVVNFGSATUPPFTRQLPAFRQLVEEFSSVADFLLVYIDEAHPSDGWAVPGDSSLSFEVKKHRNQEDRCAAAHQLLERFSLPPQCQVVADRMDNNANVAYGVAFERVCIVQRRKIAYLGGKGPFSYNLQEVRSWLEKNFSKRUILD</sequence>
<comment type="function">
    <text evidence="1 4">Plays a crucial role in the metabolism of thyroid hormones (TH) and has specific roles in TH activation and inactivation by deiodination (PubMed:10715551). Catalyzes the deiodination of L-thyroxine (T4) to 3,5,3'-triiodothyronine (T3) and 3,3',5'-triiodothyronine (rT3) to 3,3'-diiodothyronine (3,3'-T2) via outer-ring deiodination (ORD) (PubMed:10715551). Catalyzes the deiodination of 3',5'-diiodothyronine (3',5'-T2) to 3'-monoiodothyronine (3'-T1) via ORD (By similarity). Catalyzes the phenolic ring deiodinations of 3,3',5'-triiodothyronamine and 3',5'- diiodothyronamine (By similarity).</text>
</comment>
<comment type="catalytic activity">
    <reaction evidence="3 4">
        <text>3,3',5-triiodo-L-thyronine + iodide + A + H(+) = L-thyroxine + AH2</text>
        <dbReference type="Rhea" id="RHEA:19745"/>
        <dbReference type="ChEBI" id="CHEBI:13193"/>
        <dbReference type="ChEBI" id="CHEBI:15378"/>
        <dbReference type="ChEBI" id="CHEBI:16382"/>
        <dbReference type="ChEBI" id="CHEBI:17499"/>
        <dbReference type="ChEBI" id="CHEBI:58448"/>
        <dbReference type="ChEBI" id="CHEBI:533015"/>
        <dbReference type="EC" id="1.21.99.4"/>
    </reaction>
    <physiologicalReaction direction="right-to-left" evidence="6">
        <dbReference type="Rhea" id="RHEA:19747"/>
    </physiologicalReaction>
</comment>
<comment type="catalytic activity">
    <reaction evidence="4">
        <text>3,3'-diiodo-L-thyronine + iodide + A + H(+) = 3,3',5'-triiodo-L-thyronine + AH2</text>
        <dbReference type="Rhea" id="RHEA:82575"/>
        <dbReference type="ChEBI" id="CHEBI:13193"/>
        <dbReference type="ChEBI" id="CHEBI:15378"/>
        <dbReference type="ChEBI" id="CHEBI:16382"/>
        <dbReference type="ChEBI" id="CHEBI:17499"/>
        <dbReference type="ChEBI" id="CHEBI:57261"/>
        <dbReference type="ChEBI" id="CHEBI:176514"/>
    </reaction>
    <physiologicalReaction direction="right-to-left" evidence="6">
        <dbReference type="Rhea" id="RHEA:82577"/>
    </physiologicalReaction>
</comment>
<comment type="catalytic activity">
    <reaction evidence="1">
        <text>3'-iodo-L-thyronine + iodide + A + H(+) = 3',5'-diiodo-L-thyronine + AH2</text>
        <dbReference type="Rhea" id="RHEA:82899"/>
        <dbReference type="ChEBI" id="CHEBI:13193"/>
        <dbReference type="ChEBI" id="CHEBI:15378"/>
        <dbReference type="ChEBI" id="CHEBI:16382"/>
        <dbReference type="ChEBI" id="CHEBI:17499"/>
        <dbReference type="ChEBI" id="CHEBI:195762"/>
        <dbReference type="ChEBI" id="CHEBI:232695"/>
    </reaction>
    <physiologicalReaction direction="right-to-left" evidence="1">
        <dbReference type="Rhea" id="RHEA:82901"/>
    </physiologicalReaction>
</comment>
<comment type="catalytic activity">
    <reaction evidence="1">
        <text>3,3'-diiodothyronamine + iodide + A + H(+) = 3,3',5'-triiodothyronamine + AH2</text>
        <dbReference type="Rhea" id="RHEA:83795"/>
        <dbReference type="ChEBI" id="CHEBI:13193"/>
        <dbReference type="ChEBI" id="CHEBI:15378"/>
        <dbReference type="ChEBI" id="CHEBI:16382"/>
        <dbReference type="ChEBI" id="CHEBI:17499"/>
        <dbReference type="ChEBI" id="CHEBI:233341"/>
        <dbReference type="ChEBI" id="CHEBI:233343"/>
    </reaction>
    <physiologicalReaction direction="right-to-left" evidence="1">
        <dbReference type="Rhea" id="RHEA:83797"/>
    </physiologicalReaction>
</comment>
<comment type="catalytic activity">
    <reaction evidence="1">
        <text>3'-iodothyronamine + iodide + A + H(+) = 3',5'-diiodothyronamine + AH2</text>
        <dbReference type="Rhea" id="RHEA:83803"/>
        <dbReference type="ChEBI" id="CHEBI:13193"/>
        <dbReference type="ChEBI" id="CHEBI:15378"/>
        <dbReference type="ChEBI" id="CHEBI:16382"/>
        <dbReference type="ChEBI" id="CHEBI:17499"/>
        <dbReference type="ChEBI" id="CHEBI:233339"/>
        <dbReference type="ChEBI" id="CHEBI:233342"/>
    </reaction>
    <physiologicalReaction direction="right-to-left" evidence="1">
        <dbReference type="Rhea" id="RHEA:83805"/>
    </physiologicalReaction>
</comment>
<comment type="biophysicochemical properties">
    <kinetics>
        <KM evidence="4">4.4 nM for L-thyroxine</KM>
        <KM evidence="4">17 nM for 3,3',5'-triiodo-L-thyronine</KM>
    </kinetics>
</comment>
<comment type="subunit">
    <text evidence="1">Predominantly monomer. Can form homodimers but homodimerization is not essential for enzyme activity. Interacts with USP20 and USP33. Interacts with MARCHF6.</text>
</comment>
<comment type="subcellular location">
    <subcellularLocation>
        <location evidence="1">Endoplasmic reticulum membrane</location>
        <topology evidence="1">Single-pass type III membrane protein</topology>
    </subcellularLocation>
</comment>
<comment type="tissue specificity">
    <text evidence="4">Expressed in mammary gland and in brain.</text>
</comment>
<comment type="PTM">
    <text evidence="1">Ubiquitinated by MARCHF6, leading to its degradation by the proteasome. Deubiquitinated by USP20 and USP33 (By similarity).</text>
</comment>
<comment type="similarity">
    <text evidence="5">Belongs to the iodothyronine deiodinase family.</text>
</comment>
<feature type="chain" id="PRO_0000154318" description="Type II iodothyronine deiodinase">
    <location>
        <begin position="1"/>
        <end position="266"/>
    </location>
</feature>
<feature type="topological domain" description="Lumenal" evidence="1">
    <location>
        <begin position="1"/>
        <end position="9"/>
    </location>
</feature>
<feature type="transmembrane region" description="Helical; Signal-anchor for type III membrane protein" evidence="2">
    <location>
        <begin position="10"/>
        <end position="34"/>
    </location>
</feature>
<feature type="topological domain" description="Cytoplasmic" evidence="1">
    <location>
        <begin position="35"/>
        <end position="266"/>
    </location>
</feature>
<feature type="active site" evidence="1">
    <location>
        <position position="130"/>
    </location>
</feature>
<feature type="non-standard amino acid" description="Selenocysteine" evidence="1">
    <location>
        <position position="130"/>
    </location>
</feature>
<feature type="non-standard amino acid" description="Selenocysteine" evidence="1">
    <location>
        <position position="263"/>
    </location>
</feature>
<name>IOD2_MOUSE</name>
<dbReference type="EC" id="1.21.99.4" evidence="4"/>
<dbReference type="EMBL" id="AF096875">
    <property type="protein sequence ID" value="AAD11422.1"/>
    <property type="molecule type" value="mRNA"/>
</dbReference>
<dbReference type="EMBL" id="AF177196">
    <property type="protein sequence ID" value="AAD53113.1"/>
    <property type="molecule type" value="mRNA"/>
</dbReference>
<dbReference type="EMBL" id="AF093137">
    <property type="protein sequence ID" value="AAF00069.2"/>
    <property type="molecule type" value="mRNA"/>
</dbReference>
<dbReference type="EMBL" id="BC125383">
    <property type="protein sequence ID" value="AAI25384.1"/>
    <property type="molecule type" value="mRNA"/>
</dbReference>
<dbReference type="EMBL" id="BC125385">
    <property type="protein sequence ID" value="AAI25386.1"/>
    <property type="molecule type" value="mRNA"/>
</dbReference>
<dbReference type="RefSeq" id="NP_034180.1">
    <property type="nucleotide sequence ID" value="NM_010050.3"/>
</dbReference>
<dbReference type="PDB" id="9H48">
    <property type="method" value="X-ray"/>
    <property type="resolution" value="1.09 A"/>
    <property type="chains" value="A=71-262"/>
</dbReference>
<dbReference type="PDBsum" id="9H48"/>
<dbReference type="SMR" id="Q9Z1Y9"/>
<dbReference type="FunCoup" id="Q9Z1Y9">
    <property type="interactions" value="7"/>
</dbReference>
<dbReference type="STRING" id="10090.ENSMUSP00000081013"/>
<dbReference type="PaxDb" id="10090-ENSMUSP00000081013"/>
<dbReference type="ProteomicsDB" id="269074"/>
<dbReference type="Antibodypedia" id="47379">
    <property type="antibodies" value="203 antibodies from 31 providers"/>
</dbReference>
<dbReference type="DNASU" id="13371"/>
<dbReference type="GeneID" id="13371"/>
<dbReference type="KEGG" id="mmu:13371"/>
<dbReference type="UCSC" id="uc007okf.1">
    <property type="organism name" value="mouse"/>
</dbReference>
<dbReference type="AGR" id="MGI:1338833"/>
<dbReference type="CTD" id="1734"/>
<dbReference type="MGI" id="MGI:1338833">
    <property type="gene designation" value="Dio2"/>
</dbReference>
<dbReference type="VEuPathDB" id="HostDB:ENSMUSG00000007682"/>
<dbReference type="eggNOG" id="ENOG502QS2F">
    <property type="taxonomic scope" value="Eukaryota"/>
</dbReference>
<dbReference type="HOGENOM" id="CLU_089345_1_0_1"/>
<dbReference type="InParanoid" id="Q9Z1Y9"/>
<dbReference type="OMA" id="KSIWNSF"/>
<dbReference type="PhylomeDB" id="Q9Z1Y9"/>
<dbReference type="TreeFam" id="TF329721"/>
<dbReference type="BRENDA" id="1.21.99.4">
    <property type="organism ID" value="3474"/>
</dbReference>
<dbReference type="Reactome" id="R-MMU-350864">
    <property type="pathway name" value="Regulation of thyroid hormone activity"/>
</dbReference>
<dbReference type="SABIO-RK" id="Q9Z1Y9"/>
<dbReference type="BioGRID-ORCS" id="13371">
    <property type="hits" value="0 hits in 80 CRISPR screens"/>
</dbReference>
<dbReference type="ChiTaRS" id="Dio2">
    <property type="organism name" value="mouse"/>
</dbReference>
<dbReference type="PRO" id="PR:Q9Z1Y9"/>
<dbReference type="Proteomes" id="UP000000589">
    <property type="component" value="Chromosome 12"/>
</dbReference>
<dbReference type="RNAct" id="Q9Z1Y9">
    <property type="molecule type" value="protein"/>
</dbReference>
<dbReference type="Bgee" id="ENSMUSG00000007682">
    <property type="expression patterns" value="Expressed in median eminence of neurohypophysis and 152 other cell types or tissues"/>
</dbReference>
<dbReference type="GO" id="GO:0005789">
    <property type="term" value="C:endoplasmic reticulum membrane"/>
    <property type="evidence" value="ECO:0000250"/>
    <property type="project" value="UniProtKB"/>
</dbReference>
<dbReference type="GO" id="GO:0005886">
    <property type="term" value="C:plasma membrane"/>
    <property type="evidence" value="ECO:0000304"/>
    <property type="project" value="Reactome"/>
</dbReference>
<dbReference type="GO" id="GO:0004800">
    <property type="term" value="F:thyroxine 5'-deiodinase activity"/>
    <property type="evidence" value="ECO:0000314"/>
    <property type="project" value="UniProtKB"/>
</dbReference>
<dbReference type="GO" id="GO:0050873">
    <property type="term" value="P:brown fat cell differentiation"/>
    <property type="evidence" value="ECO:0000314"/>
    <property type="project" value="MGI"/>
</dbReference>
<dbReference type="GO" id="GO:0042446">
    <property type="term" value="P:hormone biosynthetic process"/>
    <property type="evidence" value="ECO:0007669"/>
    <property type="project" value="UniProtKB-KW"/>
</dbReference>
<dbReference type="GO" id="GO:0006629">
    <property type="term" value="P:lipid metabolic process"/>
    <property type="evidence" value="ECO:0000315"/>
    <property type="project" value="MGI"/>
</dbReference>
<dbReference type="GO" id="GO:0120162">
    <property type="term" value="P:positive regulation of cold-induced thermogenesis"/>
    <property type="evidence" value="ECO:0000315"/>
    <property type="project" value="YuBioLab"/>
</dbReference>
<dbReference type="GO" id="GO:0042404">
    <property type="term" value="P:thyroid hormone catabolic process"/>
    <property type="evidence" value="ECO:0000315"/>
    <property type="project" value="MGI"/>
</dbReference>
<dbReference type="GO" id="GO:0070460">
    <property type="term" value="P:thyroid-stimulating hormone secretion"/>
    <property type="evidence" value="ECO:0000304"/>
    <property type="project" value="UniProtKB"/>
</dbReference>
<dbReference type="FunFam" id="3.40.30.10:FF:000194">
    <property type="entry name" value="Iodothyronine deiodinase"/>
    <property type="match status" value="1"/>
</dbReference>
<dbReference type="Gene3D" id="3.40.30.10">
    <property type="entry name" value="Glutaredoxin"/>
    <property type="match status" value="1"/>
</dbReference>
<dbReference type="InterPro" id="IPR000643">
    <property type="entry name" value="Iodothyronine_deiodinase"/>
</dbReference>
<dbReference type="InterPro" id="IPR008261">
    <property type="entry name" value="Iodothyronine_deiodinase_AS"/>
</dbReference>
<dbReference type="InterPro" id="IPR036249">
    <property type="entry name" value="Thioredoxin-like_sf"/>
</dbReference>
<dbReference type="PANTHER" id="PTHR11781">
    <property type="entry name" value="IODOTHYRONINE DEIODINASE"/>
    <property type="match status" value="1"/>
</dbReference>
<dbReference type="PANTHER" id="PTHR11781:SF20">
    <property type="entry name" value="TYPE II IODOTHYRONINE DEIODINASE"/>
    <property type="match status" value="1"/>
</dbReference>
<dbReference type="Pfam" id="PF00837">
    <property type="entry name" value="T4_deiodinase"/>
    <property type="match status" value="1"/>
</dbReference>
<dbReference type="PIRSF" id="PIRSF001330">
    <property type="entry name" value="IOD"/>
    <property type="match status" value="1"/>
</dbReference>
<dbReference type="SUPFAM" id="SSF52833">
    <property type="entry name" value="Thioredoxin-like"/>
    <property type="match status" value="1"/>
</dbReference>
<dbReference type="PROSITE" id="PS01205">
    <property type="entry name" value="T4_DEIODINASE"/>
    <property type="match status" value="1"/>
</dbReference>
<reference key="1">
    <citation type="journal article" date="1999" name="Endocrinology">
        <title>Cloning of a 5.8 kb cDNA for a mouse type 2 deiodinase.</title>
        <authorList>
            <person name="Davey J.C."/>
            <person name="Schneider M.J."/>
            <person name="Becker K.B."/>
            <person name="Galton V.A."/>
        </authorList>
    </citation>
    <scope>NUCLEOTIDE SEQUENCE [MRNA]</scope>
    <source>
        <tissue>Brain</tissue>
    </source>
</reference>
<reference key="2">
    <citation type="journal article" date="2000" name="Mol. Cell. Endocrinol.">
        <title>Biochemical and molecular biological evidence for the presence of type II iodothyronine deiodinase in mouse mammary gland.</title>
        <authorList>
            <person name="Song S."/>
            <person name="Sorimachi K."/>
            <person name="Adachi K."/>
            <person name="Oka T."/>
        </authorList>
    </citation>
    <scope>NUCLEOTIDE SEQUENCE [MRNA]</scope>
    <scope>BIOPHYSICOCHEMICAL PROPERTIES</scope>
    <scope>TISSUE SPECIFICITY</scope>
    <scope>FUNCTION</scope>
    <scope>CATALYTIC ACTIVITY</scope>
    <source>
        <strain>C3H/HeN</strain>
        <tissue>Brain</tissue>
    </source>
</reference>
<reference key="3">
    <citation type="journal article" date="2000" name="Proc. Natl. Acad. Sci. U.S.A.">
        <title>Type 2 iodothyronine deiodinase expression in the cochlea before the onset of hearing.</title>
        <authorList>
            <person name="Campos-Barros A."/>
            <person name="Amma L.L."/>
            <person name="Faris J.S."/>
            <person name="Shailam R."/>
            <person name="Kelley M.W."/>
            <person name="Forrest D."/>
        </authorList>
    </citation>
    <scope>NUCLEOTIDE SEQUENCE [MRNA]</scope>
    <source>
        <tissue>Cochlea</tissue>
    </source>
</reference>
<reference key="4">
    <citation type="journal article" date="2004" name="Genome Res.">
        <title>The status, quality, and expansion of the NIH full-length cDNA project: the Mammalian Gene Collection (MGC).</title>
        <authorList>
            <consortium name="The MGC Project Team"/>
        </authorList>
    </citation>
    <scope>NUCLEOTIDE SEQUENCE [LARGE SCALE MRNA]</scope>
    <source>
        <tissue>Brain</tissue>
    </source>
</reference>
<keyword id="KW-0002">3D-structure</keyword>
<keyword id="KW-0256">Endoplasmic reticulum</keyword>
<keyword id="KW-0472">Membrane</keyword>
<keyword id="KW-0560">Oxidoreductase</keyword>
<keyword id="KW-1185">Reference proteome</keyword>
<keyword id="KW-0712">Selenocysteine</keyword>
<keyword id="KW-0893">Thyroid hormones biosynthesis</keyword>
<keyword id="KW-0812">Transmembrane</keyword>
<keyword id="KW-1133">Transmembrane helix</keyword>
<keyword id="KW-0832">Ubl conjugation</keyword>
<proteinExistence type="evidence at protein level"/>
<organism>
    <name type="scientific">Mus musculus</name>
    <name type="common">Mouse</name>
    <dbReference type="NCBI Taxonomy" id="10090"/>
    <lineage>
        <taxon>Eukaryota</taxon>
        <taxon>Metazoa</taxon>
        <taxon>Chordata</taxon>
        <taxon>Craniata</taxon>
        <taxon>Vertebrata</taxon>
        <taxon>Euteleostomi</taxon>
        <taxon>Mammalia</taxon>
        <taxon>Eutheria</taxon>
        <taxon>Euarchontoglires</taxon>
        <taxon>Glires</taxon>
        <taxon>Rodentia</taxon>
        <taxon>Myomorpha</taxon>
        <taxon>Muroidea</taxon>
        <taxon>Muridae</taxon>
        <taxon>Murinae</taxon>
        <taxon>Mus</taxon>
        <taxon>Mus</taxon>
    </lineage>
</organism>
<evidence type="ECO:0000250" key="1">
    <source>
        <dbReference type="UniProtKB" id="Q92813"/>
    </source>
</evidence>
<evidence type="ECO:0000255" key="2"/>
<evidence type="ECO:0000255" key="3">
    <source>
        <dbReference type="PROSITE-ProRule" id="PRU10107"/>
    </source>
</evidence>
<evidence type="ECO:0000269" key="4">
    <source>
    </source>
</evidence>
<evidence type="ECO:0000305" key="5"/>
<evidence type="ECO:0000305" key="6">
    <source>
    </source>
</evidence>
<gene>
    <name type="primary">Dio2</name>
</gene>
<protein>
    <recommendedName>
        <fullName>Type II iodothyronine deiodinase</fullName>
        <ecNumber evidence="4">1.21.99.4</ecNumber>
    </recommendedName>
    <alternativeName>
        <fullName>5DII</fullName>
    </alternativeName>
    <alternativeName>
        <fullName>DIOII</fullName>
    </alternativeName>
    <alternativeName>
        <fullName>Type 2 DI</fullName>
    </alternativeName>
    <alternativeName>
        <fullName>Type-II 5'-deiodinase</fullName>
    </alternativeName>
</protein>
<accession>Q9Z1Y9</accession>
<accession>Q05A70</accession>
<accession>Q9JHH1</accession>